<organism>
    <name type="scientific">Bos taurus</name>
    <name type="common">Bovine</name>
    <dbReference type="NCBI Taxonomy" id="9913"/>
    <lineage>
        <taxon>Eukaryota</taxon>
        <taxon>Metazoa</taxon>
        <taxon>Chordata</taxon>
        <taxon>Craniata</taxon>
        <taxon>Vertebrata</taxon>
        <taxon>Euteleostomi</taxon>
        <taxon>Mammalia</taxon>
        <taxon>Eutheria</taxon>
        <taxon>Laurasiatheria</taxon>
        <taxon>Artiodactyla</taxon>
        <taxon>Ruminantia</taxon>
        <taxon>Pecora</taxon>
        <taxon>Bovidae</taxon>
        <taxon>Bovinae</taxon>
        <taxon>Bos</taxon>
    </lineage>
</organism>
<dbReference type="EMBL" id="BC109742">
    <property type="protein sequence ID" value="AAI09743.1"/>
    <property type="molecule type" value="mRNA"/>
</dbReference>
<dbReference type="RefSeq" id="NP_001035613.1">
    <property type="nucleotide sequence ID" value="NM_001040523.2"/>
</dbReference>
<dbReference type="RefSeq" id="XP_005216824.1">
    <property type="nucleotide sequence ID" value="XM_005216767.5"/>
</dbReference>
<dbReference type="RefSeq" id="XP_010811391.1">
    <property type="nucleotide sequence ID" value="XM_010813089.4"/>
</dbReference>
<dbReference type="SMR" id="Q32L67"/>
<dbReference type="FunCoup" id="Q32L67">
    <property type="interactions" value="1579"/>
</dbReference>
<dbReference type="STRING" id="9913.ENSBTAP00000021249"/>
<dbReference type="PaxDb" id="9913-ENSBTAP00000021249"/>
<dbReference type="Ensembl" id="ENSBTAT00000021249.4">
    <property type="protein sequence ID" value="ENSBTAP00000021249.3"/>
    <property type="gene ID" value="ENSBTAG00000015972.5"/>
</dbReference>
<dbReference type="GeneID" id="513762"/>
<dbReference type="KEGG" id="bta:513762"/>
<dbReference type="CTD" id="51022"/>
<dbReference type="VEuPathDB" id="HostDB:ENSBTAG00000015972"/>
<dbReference type="VGNC" id="VGNC:29416">
    <property type="gene designation" value="GLRX2"/>
</dbReference>
<dbReference type="eggNOG" id="KOG1752">
    <property type="taxonomic scope" value="Eukaryota"/>
</dbReference>
<dbReference type="GeneTree" id="ENSGT00940000164211"/>
<dbReference type="HOGENOM" id="CLU_026126_7_0_1"/>
<dbReference type="InParanoid" id="Q32L67"/>
<dbReference type="OMA" id="DSTHAQF"/>
<dbReference type="OrthoDB" id="418495at2759"/>
<dbReference type="TreeFam" id="TF319627"/>
<dbReference type="Proteomes" id="UP000009136">
    <property type="component" value="Chromosome 16"/>
</dbReference>
<dbReference type="Bgee" id="ENSBTAG00000015972">
    <property type="expression patterns" value="Expressed in rumen papilla and 108 other cell types or tissues"/>
</dbReference>
<dbReference type="GO" id="GO:0005739">
    <property type="term" value="C:mitochondrion"/>
    <property type="evidence" value="ECO:0000318"/>
    <property type="project" value="GO_Central"/>
</dbReference>
<dbReference type="GO" id="GO:0051537">
    <property type="term" value="F:2 iron, 2 sulfur cluster binding"/>
    <property type="evidence" value="ECO:0007669"/>
    <property type="project" value="UniProtKB-KW"/>
</dbReference>
<dbReference type="GO" id="GO:0046872">
    <property type="term" value="F:metal ion binding"/>
    <property type="evidence" value="ECO:0007669"/>
    <property type="project" value="UniProtKB-KW"/>
</dbReference>
<dbReference type="GO" id="GO:0015035">
    <property type="term" value="F:protein-disulfide reductase activity"/>
    <property type="evidence" value="ECO:0000318"/>
    <property type="project" value="GO_Central"/>
</dbReference>
<dbReference type="CDD" id="cd03419">
    <property type="entry name" value="GRX_GRXh_1_2_like"/>
    <property type="match status" value="1"/>
</dbReference>
<dbReference type="FunFam" id="3.40.30.10:FF:000026">
    <property type="entry name" value="Glutaredoxin 2"/>
    <property type="match status" value="1"/>
</dbReference>
<dbReference type="Gene3D" id="3.40.30.10">
    <property type="entry name" value="Glutaredoxin"/>
    <property type="match status" value="1"/>
</dbReference>
<dbReference type="InterPro" id="IPR002109">
    <property type="entry name" value="Glutaredoxin"/>
</dbReference>
<dbReference type="InterPro" id="IPR011899">
    <property type="entry name" value="Glutaredoxin_euk/vir"/>
</dbReference>
<dbReference type="InterPro" id="IPR014025">
    <property type="entry name" value="Glutaredoxin_subgr"/>
</dbReference>
<dbReference type="InterPro" id="IPR036249">
    <property type="entry name" value="Thioredoxin-like_sf"/>
</dbReference>
<dbReference type="NCBIfam" id="TIGR02180">
    <property type="entry name" value="GRX_euk"/>
    <property type="match status" value="1"/>
</dbReference>
<dbReference type="PANTHER" id="PTHR46679">
    <property type="match status" value="1"/>
</dbReference>
<dbReference type="PANTHER" id="PTHR46679:SF1">
    <property type="entry name" value="GLUTAREDOXIN-2, MITOCHONDRIAL"/>
    <property type="match status" value="1"/>
</dbReference>
<dbReference type="Pfam" id="PF00462">
    <property type="entry name" value="Glutaredoxin"/>
    <property type="match status" value="1"/>
</dbReference>
<dbReference type="PRINTS" id="PR00160">
    <property type="entry name" value="GLUTAREDOXIN"/>
</dbReference>
<dbReference type="SUPFAM" id="SSF52833">
    <property type="entry name" value="Thioredoxin-like"/>
    <property type="match status" value="1"/>
</dbReference>
<dbReference type="PROSITE" id="PS51354">
    <property type="entry name" value="GLUTAREDOXIN_2"/>
    <property type="match status" value="1"/>
</dbReference>
<name>GLRX2_BOVIN</name>
<reference key="1">
    <citation type="submission" date="2005-11" db="EMBL/GenBank/DDBJ databases">
        <authorList>
            <consortium name="NIH - Mammalian Gene Collection (MGC) project"/>
        </authorList>
    </citation>
    <scope>NUCLEOTIDE SEQUENCE [LARGE SCALE MRNA]</scope>
    <source>
        <strain>Crossbred X Angus</strain>
        <tissue>Liver</tissue>
    </source>
</reference>
<sequence>MYWRRAALVGTRLIPVRSSSAGRLEGPAGISGSGMGNSTSSSLGNAATAPVNQIQETISNNCVVIFSKTSCSYCTMAKNLFHDMNVNYKVVELDMLEYGSQFQDALHKMTGERTVPRIFVNGTFIGGATDTHRLHKEGKLLPLVHQCHLKNSKREEL</sequence>
<proteinExistence type="evidence at transcript level"/>
<comment type="function">
    <text evidence="1">Glutathione-dependent oxidoreductase that facilitates the maintenance of mitochondrial redox homeostasis upon induction of apoptosis by oxidative stress. Involved in response to hydrogen peroxide and regulation of apoptosis caused by oxidative stress. Acts as a very efficient catalyst of monothiol reactions because of its high affinity for protein glutathione-mixed disulfides. Can receive electrons not only from glutathione (GSH), but also from thioredoxin reductase supporting both monothiol and dithiol reactions. Efficiently catalyzes both glutathionylation and deglutathionylation of mitochondrial complex I, which in turn regulates the superoxide production by the complex. Overexpression decreases the susceptibility to apoptosis and prevents loss of cardiolipin and cytochrome c release (By similarity).</text>
</comment>
<comment type="activity regulation">
    <text evidence="1">The 2Fe-2S present in the homodimer leads to inactivation of the enzyme. The 2Fe-2S may serve as a redox sensor: the presence of one-electron oxidants or reductants leading to the loss of the 2Fe-2S cluster, subsequent monomerization and activation of the enzyme (By similarity).</text>
</comment>
<comment type="subunit">
    <text evidence="1">Monomer; active form. Homodimer; inactive form. The homodimer is probably linked by 1 2Fe-2S cluster (By similarity).</text>
</comment>
<comment type="subcellular location">
    <subcellularLocation>
        <location evidence="1">Mitochondrion</location>
    </subcellularLocation>
</comment>
<comment type="similarity">
    <text evidence="5">Belongs to the glutaredoxin family.</text>
</comment>
<gene>
    <name type="primary">GLRX2</name>
</gene>
<feature type="transit peptide" description="Mitochondrion" evidence="3">
    <location>
        <begin position="1"/>
        <end position="18"/>
    </location>
</feature>
<feature type="chain" id="PRO_0000326628" description="Glutaredoxin-2, mitochondrial">
    <location>
        <begin position="19"/>
        <end position="157"/>
    </location>
</feature>
<feature type="domain" description="Glutaredoxin" evidence="4">
    <location>
        <begin position="51"/>
        <end position="151"/>
    </location>
</feature>
<feature type="binding site" description="in inactive form" evidence="1">
    <location>
        <position position="62"/>
    </location>
    <ligand>
        <name>[2Fe-2S] cluster</name>
        <dbReference type="ChEBI" id="CHEBI:190135"/>
        <note>ligand shared between dimeric partners</note>
    </ligand>
</feature>
<feature type="binding site" evidence="1">
    <location>
        <position position="68"/>
    </location>
    <ligand>
        <name>glutathione</name>
        <dbReference type="ChEBI" id="CHEBI:57925"/>
    </ligand>
</feature>
<feature type="binding site" evidence="1">
    <location>
        <position position="103"/>
    </location>
    <ligand>
        <name>glutathione</name>
        <dbReference type="ChEBI" id="CHEBI:57925"/>
    </ligand>
</feature>
<feature type="binding site" evidence="1">
    <location>
        <position position="115"/>
    </location>
    <ligand>
        <name>glutathione</name>
        <dbReference type="ChEBI" id="CHEBI:57925"/>
    </ligand>
</feature>
<feature type="binding site" description="in inactive form" evidence="1">
    <location>
        <position position="147"/>
    </location>
    <ligand>
        <name>[2Fe-2S] cluster</name>
        <dbReference type="ChEBI" id="CHEBI:190135"/>
        <note>ligand shared between dimeric partners</note>
    </ligand>
</feature>
<feature type="modified residue" description="Phosphoserine" evidence="2">
    <location>
        <position position="20"/>
    </location>
</feature>
<feature type="modified residue" description="S-glutathionyl cysteine; alternate" evidence="1">
    <location>
        <position position="71"/>
    </location>
</feature>
<feature type="disulfide bond" description="Redox-active; alternate" evidence="1">
    <location>
        <begin position="71"/>
        <end position="74"/>
    </location>
</feature>
<accession>Q32L67</accession>
<protein>
    <recommendedName>
        <fullName>Glutaredoxin-2, mitochondrial</fullName>
    </recommendedName>
</protein>
<keyword id="KW-0001">2Fe-2S</keyword>
<keyword id="KW-1015">Disulfide bond</keyword>
<keyword id="KW-0249">Electron transport</keyword>
<keyword id="KW-0318">Glutathionylation</keyword>
<keyword id="KW-0408">Iron</keyword>
<keyword id="KW-0411">Iron-sulfur</keyword>
<keyword id="KW-0479">Metal-binding</keyword>
<keyword id="KW-0496">Mitochondrion</keyword>
<keyword id="KW-0597">Phosphoprotein</keyword>
<keyword id="KW-0676">Redox-active center</keyword>
<keyword id="KW-1185">Reference proteome</keyword>
<keyword id="KW-0809">Transit peptide</keyword>
<keyword id="KW-0813">Transport</keyword>
<evidence type="ECO:0000250" key="1"/>
<evidence type="ECO:0000250" key="2">
    <source>
        <dbReference type="UniProtKB" id="Q9NS18"/>
    </source>
</evidence>
<evidence type="ECO:0000255" key="3"/>
<evidence type="ECO:0000255" key="4">
    <source>
        <dbReference type="PROSITE-ProRule" id="PRU00686"/>
    </source>
</evidence>
<evidence type="ECO:0000305" key="5"/>